<keyword id="KW-0254">Endocytosis</keyword>
<keyword id="KW-0256">Endoplasmic reticulum</keyword>
<keyword id="KW-0325">Glycoprotein</keyword>
<keyword id="KW-0472">Membrane</keyword>
<keyword id="KW-0653">Protein transport</keyword>
<keyword id="KW-1185">Reference proteome</keyword>
<keyword id="KW-0812">Transmembrane</keyword>
<keyword id="KW-1133">Transmembrane helix</keyword>
<keyword id="KW-0813">Transport</keyword>
<sequence>MSAEPLLPTHNGSQGGEVRSPDQKFIVIRFSDVSVRDLQLNISNVPFSNINTHWLRRMCRELRPQQTQKRRLKFIRNGSILNTHSKIAEELTHYFDTANNSNVATGTSVAPEQNNYYIHCIIGTEELTQAELANEDLKDDATPSNDSMTTQAIGFDRLRSVGFTEQEIELLRQQFRATYGDLEEEEERLAQNGNRDDEGHDIRQLEEQWMESGSGTAQGNGAGGGNEDRFNSVPIANIKHNKDLLLGICVGFFFGVFGILLMKFDGLFNRRQKMAIFAGVIVNVMFCLVRGF</sequence>
<accession>Q12015</accession>
<accession>D6W2S8</accession>
<dbReference type="EMBL" id="X92441">
    <property type="protein sequence ID" value="CAA63186.1"/>
    <property type="molecule type" value="Genomic_DNA"/>
</dbReference>
<dbReference type="EMBL" id="Z75131">
    <property type="protein sequence ID" value="CAA99441.1"/>
    <property type="molecule type" value="Genomic_DNA"/>
</dbReference>
<dbReference type="EMBL" id="BK006948">
    <property type="protein sequence ID" value="DAA10994.1"/>
    <property type="molecule type" value="Genomic_DNA"/>
</dbReference>
<dbReference type="PIR" id="S60950">
    <property type="entry name" value="S60950"/>
</dbReference>
<dbReference type="RefSeq" id="NP_014866.3">
    <property type="nucleotide sequence ID" value="NM_001183642.3"/>
</dbReference>
<dbReference type="BioGRID" id="34617">
    <property type="interactions" value="74"/>
</dbReference>
<dbReference type="ComplexPortal" id="CPX-1190">
    <property type="entry name" value="TUL1 E3 ubiquitin ligase complex"/>
</dbReference>
<dbReference type="FunCoup" id="Q12015">
    <property type="interactions" value="37"/>
</dbReference>
<dbReference type="IntAct" id="Q12015">
    <property type="interactions" value="7"/>
</dbReference>
<dbReference type="STRING" id="4932.YOR223W"/>
<dbReference type="GlyCosmos" id="Q12015">
    <property type="glycosylation" value="5 sites, No reported glycans"/>
</dbReference>
<dbReference type="GlyGen" id="Q12015">
    <property type="glycosylation" value="6 sites"/>
</dbReference>
<dbReference type="iPTMnet" id="Q12015"/>
<dbReference type="PaxDb" id="4932-YOR223W"/>
<dbReference type="PeptideAtlas" id="Q12015"/>
<dbReference type="EnsemblFungi" id="YOR223W_mRNA">
    <property type="protein sequence ID" value="YOR223W"/>
    <property type="gene ID" value="YOR223W"/>
</dbReference>
<dbReference type="GeneID" id="854398"/>
<dbReference type="KEGG" id="sce:YOR223W"/>
<dbReference type="AGR" id="SGD:S000005749"/>
<dbReference type="SGD" id="S000005749">
    <property type="gene designation" value="DSC3"/>
</dbReference>
<dbReference type="VEuPathDB" id="FungiDB:YOR223W"/>
<dbReference type="eggNOG" id="ENOG502RXWC">
    <property type="taxonomic scope" value="Eukaryota"/>
</dbReference>
<dbReference type="HOGENOM" id="CLU_035821_1_1_1"/>
<dbReference type="InParanoid" id="Q12015"/>
<dbReference type="OMA" id="RIYVNCS"/>
<dbReference type="OrthoDB" id="2556122at2759"/>
<dbReference type="BioCyc" id="YEAST:G3O-33722-MONOMER"/>
<dbReference type="BioGRID-ORCS" id="854398">
    <property type="hits" value="5 hits in 10 CRISPR screens"/>
</dbReference>
<dbReference type="PRO" id="PR:Q12015"/>
<dbReference type="Proteomes" id="UP000002311">
    <property type="component" value="Chromosome XV"/>
</dbReference>
<dbReference type="RNAct" id="Q12015">
    <property type="molecule type" value="protein"/>
</dbReference>
<dbReference type="GO" id="GO:0044695">
    <property type="term" value="C:Dsc E3 ubiquitin ligase complex"/>
    <property type="evidence" value="ECO:0000314"/>
    <property type="project" value="SGD"/>
</dbReference>
<dbReference type="GO" id="GO:0005783">
    <property type="term" value="C:endoplasmic reticulum"/>
    <property type="evidence" value="ECO:0000314"/>
    <property type="project" value="SGD"/>
</dbReference>
<dbReference type="GO" id="GO:0005789">
    <property type="term" value="C:endoplasmic reticulum membrane"/>
    <property type="evidence" value="ECO:0007669"/>
    <property type="project" value="UniProtKB-SubCell"/>
</dbReference>
<dbReference type="GO" id="GO:0000328">
    <property type="term" value="C:fungal-type vacuole lumen"/>
    <property type="evidence" value="ECO:0000314"/>
    <property type="project" value="SGD"/>
</dbReference>
<dbReference type="GO" id="GO:0000139">
    <property type="term" value="C:Golgi membrane"/>
    <property type="evidence" value="ECO:0000303"/>
    <property type="project" value="ComplexPortal"/>
</dbReference>
<dbReference type="GO" id="GO:0006897">
    <property type="term" value="P:endocytosis"/>
    <property type="evidence" value="ECO:0007669"/>
    <property type="project" value="UniProtKB-KW"/>
</dbReference>
<dbReference type="GO" id="GO:0015031">
    <property type="term" value="P:protein transport"/>
    <property type="evidence" value="ECO:0007669"/>
    <property type="project" value="UniProtKB-KW"/>
</dbReference>
<dbReference type="GO" id="GO:0016567">
    <property type="term" value="P:protein ubiquitination"/>
    <property type="evidence" value="ECO:0000314"/>
    <property type="project" value="ComplexPortal"/>
</dbReference>
<dbReference type="GO" id="GO:0006511">
    <property type="term" value="P:ubiquitin-dependent protein catabolic process"/>
    <property type="evidence" value="ECO:0000303"/>
    <property type="project" value="ComplexPortal"/>
</dbReference>
<dbReference type="InterPro" id="IPR045226">
    <property type="entry name" value="Dsc3"/>
</dbReference>
<dbReference type="InterPro" id="IPR025390">
    <property type="entry name" value="Dsc3_C"/>
</dbReference>
<dbReference type="InterPro" id="IPR019413">
    <property type="entry name" value="Dsc3_ub-like_dom"/>
</dbReference>
<dbReference type="PANTHER" id="PTHR28049:SF1">
    <property type="entry name" value="DSC E3 UBIQUITIN LIGASE COMPLEX SUBUNIT 3"/>
    <property type="match status" value="1"/>
</dbReference>
<dbReference type="PANTHER" id="PTHR28049">
    <property type="entry name" value="TRANSMEMBRANE PROTEIN YOR223W"/>
    <property type="match status" value="1"/>
</dbReference>
<dbReference type="Pfam" id="PF13373">
    <property type="entry name" value="Dsc3_C"/>
    <property type="match status" value="1"/>
</dbReference>
<dbReference type="Pfam" id="PF10302">
    <property type="entry name" value="Dsc3_N"/>
    <property type="match status" value="1"/>
</dbReference>
<organism>
    <name type="scientific">Saccharomyces cerevisiae (strain ATCC 204508 / S288c)</name>
    <name type="common">Baker's yeast</name>
    <dbReference type="NCBI Taxonomy" id="559292"/>
    <lineage>
        <taxon>Eukaryota</taxon>
        <taxon>Fungi</taxon>
        <taxon>Dikarya</taxon>
        <taxon>Ascomycota</taxon>
        <taxon>Saccharomycotina</taxon>
        <taxon>Saccharomycetes</taxon>
        <taxon>Saccharomycetales</taxon>
        <taxon>Saccharomycetaceae</taxon>
        <taxon>Saccharomyces</taxon>
    </lineage>
</organism>
<gene>
    <name evidence="5" type="primary">DSC3</name>
    <name type="ordered locus">YOR223W</name>
    <name type="ORF">YOR50-13</name>
</gene>
<evidence type="ECO:0000255" key="1"/>
<evidence type="ECO:0000269" key="2">
    <source>
    </source>
</evidence>
<evidence type="ECO:0000269" key="3">
    <source>
    </source>
</evidence>
<evidence type="ECO:0000269" key="4">
    <source>
    </source>
</evidence>
<evidence type="ECO:0000303" key="5">
    <source>
    </source>
</evidence>
<evidence type="ECO:0000305" key="6"/>
<proteinExistence type="evidence at protein level"/>
<feature type="chain" id="PRO_0000237667" description="DSC E3 ubiquitin ligase complex subunit 3">
    <location>
        <begin position="1"/>
        <end position="292"/>
    </location>
</feature>
<feature type="topological domain" description="Extracellular" evidence="1">
    <location>
        <begin position="1"/>
        <end position="243"/>
    </location>
</feature>
<feature type="transmembrane region" description="Helical" evidence="1">
    <location>
        <begin position="244"/>
        <end position="264"/>
    </location>
</feature>
<feature type="topological domain" description="Cytoplasmic" evidence="1">
    <location>
        <begin position="265"/>
        <end position="273"/>
    </location>
</feature>
<feature type="transmembrane region" description="Helical" evidence="1">
    <location>
        <begin position="274"/>
        <end position="291"/>
    </location>
</feature>
<feature type="topological domain" description="Extracellular" evidence="1">
    <location>
        <position position="292"/>
    </location>
</feature>
<feature type="glycosylation site" description="N-linked (GlcNAc...) asparagine" evidence="1">
    <location>
        <position position="11"/>
    </location>
</feature>
<feature type="glycosylation site" description="N-linked (GlcNAc...) asparagine" evidence="1">
    <location>
        <position position="41"/>
    </location>
</feature>
<feature type="glycosylation site" description="N-linked (GlcNAc...) asparagine" evidence="1">
    <location>
        <position position="77"/>
    </location>
</feature>
<feature type="glycosylation site" description="N-linked (GlcNAc...) asparagine" evidence="1">
    <location>
        <position position="99"/>
    </location>
</feature>
<feature type="glycosylation site" description="N-linked (GlcNAc...) asparagine" evidence="1">
    <location>
        <position position="145"/>
    </location>
</feature>
<name>DSC3_YEAST</name>
<reference key="1">
    <citation type="journal article" date="1996" name="Yeast">
        <title>Sequence and analysis of a 33 kb fragment from the right arm of chromosome XV of the yeast Saccharomyces cerevisiae.</title>
        <authorList>
            <person name="Galisson F."/>
            <person name="Dujon B."/>
        </authorList>
    </citation>
    <scope>NUCLEOTIDE SEQUENCE [GENOMIC DNA]</scope>
    <source>
        <strain>ATCC 96604 / S288c / FY1679</strain>
    </source>
</reference>
<reference key="2">
    <citation type="journal article" date="1997" name="Nature">
        <title>The nucleotide sequence of Saccharomyces cerevisiae chromosome XV.</title>
        <authorList>
            <person name="Dujon B."/>
            <person name="Albermann K."/>
            <person name="Aldea M."/>
            <person name="Alexandraki D."/>
            <person name="Ansorge W."/>
            <person name="Arino J."/>
            <person name="Benes V."/>
            <person name="Bohn C."/>
            <person name="Bolotin-Fukuhara M."/>
            <person name="Bordonne R."/>
            <person name="Boyer J."/>
            <person name="Camasses A."/>
            <person name="Casamayor A."/>
            <person name="Casas C."/>
            <person name="Cheret G."/>
            <person name="Cziepluch C."/>
            <person name="Daignan-Fornier B."/>
            <person name="Dang V.-D."/>
            <person name="de Haan M."/>
            <person name="Delius H."/>
            <person name="Durand P."/>
            <person name="Fairhead C."/>
            <person name="Feldmann H."/>
            <person name="Gaillon L."/>
            <person name="Galisson F."/>
            <person name="Gamo F.-J."/>
            <person name="Gancedo C."/>
            <person name="Goffeau A."/>
            <person name="Goulding S.E."/>
            <person name="Grivell L.A."/>
            <person name="Habbig B."/>
            <person name="Hand N.J."/>
            <person name="Hani J."/>
            <person name="Hattenhorst U."/>
            <person name="Hebling U."/>
            <person name="Hernando Y."/>
            <person name="Herrero E."/>
            <person name="Heumann K."/>
            <person name="Hiesel R."/>
            <person name="Hilger F."/>
            <person name="Hofmann B."/>
            <person name="Hollenberg C.P."/>
            <person name="Hughes B."/>
            <person name="Jauniaux J.-C."/>
            <person name="Kalogeropoulos A."/>
            <person name="Katsoulou C."/>
            <person name="Kordes E."/>
            <person name="Lafuente M.J."/>
            <person name="Landt O."/>
            <person name="Louis E.J."/>
            <person name="Maarse A.C."/>
            <person name="Madania A."/>
            <person name="Mannhaupt G."/>
            <person name="Marck C."/>
            <person name="Martin R.P."/>
            <person name="Mewes H.-W."/>
            <person name="Michaux G."/>
            <person name="Paces V."/>
            <person name="Parle-McDermott A.G."/>
            <person name="Pearson B.M."/>
            <person name="Perrin A."/>
            <person name="Pettersson B."/>
            <person name="Poch O."/>
            <person name="Pohl T.M."/>
            <person name="Poirey R."/>
            <person name="Portetelle D."/>
            <person name="Pujol A."/>
            <person name="Purnelle B."/>
            <person name="Ramezani Rad M."/>
            <person name="Rechmann S."/>
            <person name="Schwager C."/>
            <person name="Schweizer M."/>
            <person name="Sor F."/>
            <person name="Sterky F."/>
            <person name="Tarassov I.A."/>
            <person name="Teodoru C."/>
            <person name="Tettelin H."/>
            <person name="Thierry A."/>
            <person name="Tobiasch E."/>
            <person name="Tzermia M."/>
            <person name="Uhlen M."/>
            <person name="Unseld M."/>
            <person name="Valens M."/>
            <person name="Vandenbol M."/>
            <person name="Vetter I."/>
            <person name="Vlcek C."/>
            <person name="Voet M."/>
            <person name="Volckaert G."/>
            <person name="Voss H."/>
            <person name="Wambutt R."/>
            <person name="Wedler H."/>
            <person name="Wiemann S."/>
            <person name="Winsor B."/>
            <person name="Wolfe K.H."/>
            <person name="Zollner A."/>
            <person name="Zumstein E."/>
            <person name="Kleine K."/>
        </authorList>
    </citation>
    <scope>NUCLEOTIDE SEQUENCE [LARGE SCALE GENOMIC DNA]</scope>
    <source>
        <strain>ATCC 204508 / S288c</strain>
    </source>
</reference>
<reference key="3">
    <citation type="journal article" date="2014" name="G3 (Bethesda)">
        <title>The reference genome sequence of Saccharomyces cerevisiae: Then and now.</title>
        <authorList>
            <person name="Engel S.R."/>
            <person name="Dietrich F.S."/>
            <person name="Fisk D.G."/>
            <person name="Binkley G."/>
            <person name="Balakrishnan R."/>
            <person name="Costanzo M.C."/>
            <person name="Dwight S.S."/>
            <person name="Hitz B.C."/>
            <person name="Karra K."/>
            <person name="Nash R.S."/>
            <person name="Weng S."/>
            <person name="Wong E.D."/>
            <person name="Lloyd P."/>
            <person name="Skrzypek M.S."/>
            <person name="Miyasato S.R."/>
            <person name="Simison M."/>
            <person name="Cherry J.M."/>
        </authorList>
    </citation>
    <scope>GENOME REANNOTATION</scope>
    <source>
        <strain>ATCC 204508 / S288c</strain>
    </source>
</reference>
<reference key="4">
    <citation type="journal article" date="2006" name="Proc. Natl. Acad. Sci. U.S.A.">
        <title>A global topology map of the Saccharomyces cerevisiae membrane proteome.</title>
        <authorList>
            <person name="Kim H."/>
            <person name="Melen K."/>
            <person name="Oesterberg M."/>
            <person name="von Heijne G."/>
        </authorList>
    </citation>
    <scope>TOPOLOGY [LARGE SCALE ANALYSIS]</scope>
    <source>
        <strain>ATCC 208353 / W303-1A</strain>
    </source>
</reference>
<reference key="5">
    <citation type="journal article" date="2011" name="Traffic">
        <title>An overexpression screen in Saccharomyces cerevisiae identifies novel genes that affect endocytic protein trafficking.</title>
        <authorList>
            <person name="Arlt H."/>
            <person name="Perz A."/>
            <person name="Ungermann C."/>
        </authorList>
    </citation>
    <scope>FUNCTION</scope>
    <scope>SUBCELLULAR LOCATION</scope>
</reference>
<reference key="6">
    <citation type="journal article" date="2014" name="Mol. Cell. Proteomics">
        <title>Identification of candidate substrates for the Golgi Tul1 E3 ligase using quantitative diGly proteomics in yeast.</title>
        <authorList>
            <person name="Tong Z."/>
            <person name="Kim M.S."/>
            <person name="Pandey A."/>
            <person name="Espenshade P.J."/>
        </authorList>
    </citation>
    <scope>FUNCTION</scope>
    <scope>IDENTIFICATION IN THE DSC E3 UBIQUITIN LIGASE COMPLEX</scope>
</reference>
<reference key="7">
    <citation type="journal article" date="2018" name="Elife">
        <title>Sorting of a multi-subunit ubiquitin ligase complex in the endolysosome system.</title>
        <authorList>
            <person name="Yang X."/>
            <person name="Arines F.M."/>
            <person name="Zhang W."/>
            <person name="Li M."/>
        </authorList>
    </citation>
    <scope>FUNCTION</scope>
    <scope>SUBCELLULAR LOCATION</scope>
    <scope>SUBUNIT</scope>
</reference>
<comment type="function">
    <text evidence="2 3 4">Component of the DSC E3 ubiquitin ligase complexes that tag proteins present in Golgi, endosome and vacuole membranes and function in protein homeostasis under non-stress conditions and support a role in protein quality control (PubMed:25078903, PubMed:29355480). Involved in endocytic protein trafficking (PubMed:21777356).</text>
</comment>
<comment type="subunit">
    <text evidence="3 4">Component of the DSC E3 ligase complexes composed of at least TUL1, DSC2, DSC3, UBX3, CDC48 as well as VLD1 for the vacuole-localized complex or GLD1 for the Golgi/endosome-localized complex.</text>
</comment>
<comment type="subcellular location">
    <subcellularLocation>
        <location evidence="2">Endoplasmic reticulum membrane</location>
        <topology evidence="2">Multi-pass membrane protein</topology>
    </subcellularLocation>
</comment>
<comment type="similarity">
    <text evidence="6">Belongs to the dsc3 family.</text>
</comment>
<protein>
    <recommendedName>
        <fullName evidence="5">DSC E3 ubiquitin ligase complex subunit 3</fullName>
    </recommendedName>
    <alternativeName>
        <fullName evidence="5">Defective for SREBP cleavage protein 3</fullName>
    </alternativeName>
</protein>